<reference key="1">
    <citation type="journal article" date="1993" name="J. Mol. Evol.">
        <title>Phylogenetic relationships of ferns deduced from rbcL gene sequence.</title>
        <authorList>
            <person name="Hasebe M."/>
            <person name="Ito M."/>
            <person name="Kofuji R."/>
            <person name="Ueda K."/>
            <person name="Iwatsuki K."/>
        </authorList>
    </citation>
    <scope>NUCLEOTIDE SEQUENCE [GENOMIC DNA]</scope>
    <source>
        <tissue>Leaf</tissue>
    </source>
</reference>
<reference key="2">
    <citation type="journal article" date="2003" name="DNA Res.">
        <title>Complete nucleotide sequence of the chloroplast genome from a leptosporangiate fern, Adiantum capillus-veneris L.</title>
        <authorList>
            <person name="Wolf P.G."/>
            <person name="Rowe C.A."/>
            <person name="Sinclair R.B."/>
            <person name="Hasebe M."/>
        </authorList>
    </citation>
    <scope>NUCLEOTIDE SEQUENCE [LARGE SCALE GENOMIC DNA]</scope>
</reference>
<reference key="3">
    <citation type="journal article" date="2004" name="Gene">
        <title>High levels of RNA editing in a vascular plant chloroplast genome: analysis of transcripts from the fern Adiantum capillus-veneris.</title>
        <authorList>
            <person name="Wolf P.G."/>
            <person name="Rowe C.A."/>
            <person name="Hasebe M."/>
        </authorList>
    </citation>
    <scope>NUCLEOTIDE SEQUENCE [GENOMIC DNA]</scope>
    <scope>ABSENCE OF RNA EDITING</scope>
    <source>
        <tissue>Frond</tissue>
    </source>
</reference>
<gene>
    <name evidence="1" type="primary">rbcL</name>
</gene>
<sequence length="475" mass="52634">MSPQTETKAGVGFKAGVKDYRLTYYTPEYKTKDTDILAAFRMTPQPGVPAEEAGAAVAAESSTGTWTTVWTDGLTSLDRYKGRCYDIEPVAGEENQYIAYVAYPLDLFEEGSVTNMLTSIVGNVFGFKALRALRLEDLRIPPAYSKTFLGPPHGIQVERDKLNKYGRPLLGCTIKPKLGLSAKNYGRAVYECLRGGLDFTKDDENVNSQPFMRWRDRFLFVAEALFKSQAETGEIKGHYLNATAGTCEEMMKRAVFARELGAPIVMHDYLTGGFTANTSLAFYCRDNGLLLHIHRAMHAVIDRQKNHGIHFRVLAKALRMSGGDHIHAGTVVGKLEGEREVTLGFVDLLRDDYIEKDRSRGIYFTQDWVSMPGVFPVASGGIHVWHMPALTEIFGDDSVLQFGGGTLGHPWGNAPGAVANRVALEACVQARNEGRDLAREGNEIIREASKWSPELAAACEIWKAIKFEFETIDTL</sequence>
<proteinExistence type="evidence at transcript level"/>
<dbReference type="EC" id="4.1.1.39" evidence="1"/>
<dbReference type="EMBL" id="D14880">
    <property type="protein sequence ID" value="BAA03599.1"/>
    <property type="molecule type" value="Genomic_DNA"/>
</dbReference>
<dbReference type="EMBL" id="AY178864">
    <property type="protein sequence ID" value="AAP29399.1"/>
    <property type="molecule type" value="Genomic_DNA"/>
</dbReference>
<dbReference type="RefSeq" id="NP_848068.1">
    <property type="nucleotide sequence ID" value="NC_004766.1"/>
</dbReference>
<dbReference type="SMR" id="P36476"/>
<dbReference type="GeneID" id="807346"/>
<dbReference type="GO" id="GO:0009507">
    <property type="term" value="C:chloroplast"/>
    <property type="evidence" value="ECO:0007669"/>
    <property type="project" value="UniProtKB-SubCell"/>
</dbReference>
<dbReference type="GO" id="GO:0000287">
    <property type="term" value="F:magnesium ion binding"/>
    <property type="evidence" value="ECO:0007669"/>
    <property type="project" value="UniProtKB-UniRule"/>
</dbReference>
<dbReference type="GO" id="GO:0004497">
    <property type="term" value="F:monooxygenase activity"/>
    <property type="evidence" value="ECO:0007669"/>
    <property type="project" value="UniProtKB-KW"/>
</dbReference>
<dbReference type="GO" id="GO:0016984">
    <property type="term" value="F:ribulose-bisphosphate carboxylase activity"/>
    <property type="evidence" value="ECO:0007669"/>
    <property type="project" value="UniProtKB-UniRule"/>
</dbReference>
<dbReference type="GO" id="GO:0009853">
    <property type="term" value="P:photorespiration"/>
    <property type="evidence" value="ECO:0007669"/>
    <property type="project" value="UniProtKB-KW"/>
</dbReference>
<dbReference type="GO" id="GO:0019253">
    <property type="term" value="P:reductive pentose-phosphate cycle"/>
    <property type="evidence" value="ECO:0007669"/>
    <property type="project" value="UniProtKB-UniRule"/>
</dbReference>
<dbReference type="CDD" id="cd08212">
    <property type="entry name" value="RuBisCO_large_I"/>
    <property type="match status" value="1"/>
</dbReference>
<dbReference type="FunFam" id="3.20.20.110:FF:000001">
    <property type="entry name" value="Ribulose bisphosphate carboxylase large chain"/>
    <property type="match status" value="1"/>
</dbReference>
<dbReference type="FunFam" id="3.30.70.150:FF:000001">
    <property type="entry name" value="Ribulose bisphosphate carboxylase large chain"/>
    <property type="match status" value="1"/>
</dbReference>
<dbReference type="Gene3D" id="3.20.20.110">
    <property type="entry name" value="Ribulose bisphosphate carboxylase, large subunit, C-terminal domain"/>
    <property type="match status" value="1"/>
</dbReference>
<dbReference type="Gene3D" id="3.30.70.150">
    <property type="entry name" value="RuBisCO large subunit, N-terminal domain"/>
    <property type="match status" value="1"/>
</dbReference>
<dbReference type="HAMAP" id="MF_01338">
    <property type="entry name" value="RuBisCO_L_type1"/>
    <property type="match status" value="1"/>
</dbReference>
<dbReference type="InterPro" id="IPR033966">
    <property type="entry name" value="RuBisCO"/>
</dbReference>
<dbReference type="InterPro" id="IPR020878">
    <property type="entry name" value="RuBisCo_large_chain_AS"/>
</dbReference>
<dbReference type="InterPro" id="IPR000685">
    <property type="entry name" value="RuBisCO_lsu_C"/>
</dbReference>
<dbReference type="InterPro" id="IPR036376">
    <property type="entry name" value="RuBisCO_lsu_C_sf"/>
</dbReference>
<dbReference type="InterPro" id="IPR017443">
    <property type="entry name" value="RuBisCO_lsu_fd_N"/>
</dbReference>
<dbReference type="InterPro" id="IPR036422">
    <property type="entry name" value="RuBisCO_lsu_N_sf"/>
</dbReference>
<dbReference type="InterPro" id="IPR020888">
    <property type="entry name" value="RuBisCO_lsuI"/>
</dbReference>
<dbReference type="NCBIfam" id="NF003252">
    <property type="entry name" value="PRK04208.1"/>
    <property type="match status" value="1"/>
</dbReference>
<dbReference type="PANTHER" id="PTHR42704">
    <property type="entry name" value="RIBULOSE BISPHOSPHATE CARBOXYLASE"/>
    <property type="match status" value="1"/>
</dbReference>
<dbReference type="PANTHER" id="PTHR42704:SF17">
    <property type="entry name" value="RIBULOSE BISPHOSPHATE CARBOXYLASE LARGE CHAIN"/>
    <property type="match status" value="1"/>
</dbReference>
<dbReference type="Pfam" id="PF00016">
    <property type="entry name" value="RuBisCO_large"/>
    <property type="match status" value="1"/>
</dbReference>
<dbReference type="Pfam" id="PF02788">
    <property type="entry name" value="RuBisCO_large_N"/>
    <property type="match status" value="1"/>
</dbReference>
<dbReference type="SFLD" id="SFLDG01052">
    <property type="entry name" value="RuBisCO"/>
    <property type="match status" value="1"/>
</dbReference>
<dbReference type="SFLD" id="SFLDS00014">
    <property type="entry name" value="RuBisCO"/>
    <property type="match status" value="1"/>
</dbReference>
<dbReference type="SFLD" id="SFLDG00301">
    <property type="entry name" value="RuBisCO-like_proteins"/>
    <property type="match status" value="1"/>
</dbReference>
<dbReference type="SUPFAM" id="SSF51649">
    <property type="entry name" value="RuBisCo, C-terminal domain"/>
    <property type="match status" value="1"/>
</dbReference>
<dbReference type="SUPFAM" id="SSF54966">
    <property type="entry name" value="RuBisCO, large subunit, small (N-terminal) domain"/>
    <property type="match status" value="1"/>
</dbReference>
<dbReference type="PROSITE" id="PS00157">
    <property type="entry name" value="RUBISCO_LARGE"/>
    <property type="match status" value="1"/>
</dbReference>
<keyword id="KW-0007">Acetylation</keyword>
<keyword id="KW-0113">Calvin cycle</keyword>
<keyword id="KW-0120">Carbon dioxide fixation</keyword>
<keyword id="KW-0150">Chloroplast</keyword>
<keyword id="KW-1015">Disulfide bond</keyword>
<keyword id="KW-0456">Lyase</keyword>
<keyword id="KW-0460">Magnesium</keyword>
<keyword id="KW-0479">Metal-binding</keyword>
<keyword id="KW-0488">Methylation</keyword>
<keyword id="KW-0503">Monooxygenase</keyword>
<keyword id="KW-0560">Oxidoreductase</keyword>
<keyword id="KW-0601">Photorespiration</keyword>
<keyword id="KW-0602">Photosynthesis</keyword>
<keyword id="KW-0934">Plastid</keyword>
<evidence type="ECO:0000255" key="1">
    <source>
        <dbReference type="HAMAP-Rule" id="MF_01338"/>
    </source>
</evidence>
<geneLocation type="chloroplast"/>
<feature type="propeptide" id="PRO_0000031101" evidence="1">
    <location>
        <begin position="1"/>
        <end position="2"/>
    </location>
</feature>
<feature type="chain" id="PRO_0000031102" description="Ribulose bisphosphate carboxylase large chain">
    <location>
        <begin position="3"/>
        <end position="475"/>
    </location>
</feature>
<feature type="active site" description="Proton acceptor" evidence="1">
    <location>
        <position position="175"/>
    </location>
</feature>
<feature type="active site" description="Proton acceptor" evidence="1">
    <location>
        <position position="294"/>
    </location>
</feature>
<feature type="binding site" description="in homodimeric partner" evidence="1">
    <location>
        <position position="123"/>
    </location>
    <ligand>
        <name>substrate</name>
    </ligand>
</feature>
<feature type="binding site" evidence="1">
    <location>
        <position position="173"/>
    </location>
    <ligand>
        <name>substrate</name>
    </ligand>
</feature>
<feature type="binding site" evidence="1">
    <location>
        <position position="177"/>
    </location>
    <ligand>
        <name>substrate</name>
    </ligand>
</feature>
<feature type="binding site" description="via carbamate group" evidence="1">
    <location>
        <position position="201"/>
    </location>
    <ligand>
        <name>Mg(2+)</name>
        <dbReference type="ChEBI" id="CHEBI:18420"/>
    </ligand>
</feature>
<feature type="binding site" evidence="1">
    <location>
        <position position="203"/>
    </location>
    <ligand>
        <name>Mg(2+)</name>
        <dbReference type="ChEBI" id="CHEBI:18420"/>
    </ligand>
</feature>
<feature type="binding site" evidence="1">
    <location>
        <position position="204"/>
    </location>
    <ligand>
        <name>Mg(2+)</name>
        <dbReference type="ChEBI" id="CHEBI:18420"/>
    </ligand>
</feature>
<feature type="binding site" evidence="1">
    <location>
        <position position="295"/>
    </location>
    <ligand>
        <name>substrate</name>
    </ligand>
</feature>
<feature type="binding site" evidence="1">
    <location>
        <position position="327"/>
    </location>
    <ligand>
        <name>substrate</name>
    </ligand>
</feature>
<feature type="binding site" evidence="1">
    <location>
        <position position="379"/>
    </location>
    <ligand>
        <name>substrate</name>
    </ligand>
</feature>
<feature type="site" description="Transition state stabilizer" evidence="1">
    <location>
        <position position="334"/>
    </location>
</feature>
<feature type="modified residue" description="N-acetylproline" evidence="1">
    <location>
        <position position="3"/>
    </location>
</feature>
<feature type="modified residue" description="N6,N6,N6-trimethyllysine" evidence="1">
    <location>
        <position position="14"/>
    </location>
</feature>
<feature type="modified residue" description="N6-carboxylysine" evidence="1">
    <location>
        <position position="201"/>
    </location>
</feature>
<feature type="disulfide bond" description="Interchain; in linked form" evidence="1">
    <location>
        <position position="247"/>
    </location>
</feature>
<comment type="function">
    <text evidence="1">RuBisCO catalyzes two reactions: the carboxylation of D-ribulose 1,5-bisphosphate, the primary event in carbon dioxide fixation, as well as the oxidative fragmentation of the pentose substrate in the photorespiration process. Both reactions occur simultaneously and in competition at the same active site.</text>
</comment>
<comment type="catalytic activity">
    <reaction evidence="1">
        <text>2 (2R)-3-phosphoglycerate + 2 H(+) = D-ribulose 1,5-bisphosphate + CO2 + H2O</text>
        <dbReference type="Rhea" id="RHEA:23124"/>
        <dbReference type="ChEBI" id="CHEBI:15377"/>
        <dbReference type="ChEBI" id="CHEBI:15378"/>
        <dbReference type="ChEBI" id="CHEBI:16526"/>
        <dbReference type="ChEBI" id="CHEBI:57870"/>
        <dbReference type="ChEBI" id="CHEBI:58272"/>
        <dbReference type="EC" id="4.1.1.39"/>
    </reaction>
</comment>
<comment type="catalytic activity">
    <reaction evidence="1">
        <text>D-ribulose 1,5-bisphosphate + O2 = 2-phosphoglycolate + (2R)-3-phosphoglycerate + 2 H(+)</text>
        <dbReference type="Rhea" id="RHEA:36631"/>
        <dbReference type="ChEBI" id="CHEBI:15378"/>
        <dbReference type="ChEBI" id="CHEBI:15379"/>
        <dbReference type="ChEBI" id="CHEBI:57870"/>
        <dbReference type="ChEBI" id="CHEBI:58033"/>
        <dbReference type="ChEBI" id="CHEBI:58272"/>
    </reaction>
</comment>
<comment type="cofactor">
    <cofactor evidence="1">
        <name>Mg(2+)</name>
        <dbReference type="ChEBI" id="CHEBI:18420"/>
    </cofactor>
    <text evidence="1">Binds 1 Mg(2+) ion per subunit.</text>
</comment>
<comment type="subunit">
    <text evidence="1">Heterohexadecamer of 8 large chains and 8 small chains; disulfide-linked. The disulfide link is formed within the large subunit homodimers.</text>
</comment>
<comment type="subcellular location">
    <subcellularLocation>
        <location>Plastid</location>
        <location>Chloroplast</location>
    </subcellularLocation>
</comment>
<comment type="PTM">
    <text evidence="1">The disulfide bond which can form in the large chain dimeric partners within the hexadecamer appears to be associated with oxidative stress and protein turnover.</text>
</comment>
<comment type="miscellaneous">
    <text evidence="1">The basic functional RuBisCO is composed of a large chain homodimer in a 'head-to-tail' conformation. In form I RuBisCO this homodimer is arranged in a barrel-like tetramer with the small subunits forming a tetrameric 'cap' on each end of the 'barrel'.</text>
</comment>
<comment type="similarity">
    <text evidence="1">Belongs to the RuBisCO large chain family. Type I subfamily.</text>
</comment>
<accession>P36476</accession>
<name>RBL_ADICA</name>
<protein>
    <recommendedName>
        <fullName evidence="1">Ribulose bisphosphate carboxylase large chain</fullName>
        <shortName evidence="1">RuBisCO large subunit</shortName>
        <ecNumber evidence="1">4.1.1.39</ecNumber>
    </recommendedName>
</protein>
<organism>
    <name type="scientific">Adiantum capillus-veneris</name>
    <name type="common">Maidenhair fern</name>
    <dbReference type="NCBI Taxonomy" id="13818"/>
    <lineage>
        <taxon>Eukaryota</taxon>
        <taxon>Viridiplantae</taxon>
        <taxon>Streptophyta</taxon>
        <taxon>Embryophyta</taxon>
        <taxon>Tracheophyta</taxon>
        <taxon>Polypodiopsida</taxon>
        <taxon>Polypodiidae</taxon>
        <taxon>Polypodiales</taxon>
        <taxon>Pteridineae</taxon>
        <taxon>Pteridaceae</taxon>
        <taxon>Vittarioideae</taxon>
        <taxon>Adiantum</taxon>
    </lineage>
</organism>